<sequence length="75" mass="8302">MPQISRYSDEQVEQLLAELLNILEKHKAPTDLSLMVLGNMVTNLINTSIAPAQRQAIANSFARALQSSINEDKAH</sequence>
<accession>B7UFK4</accession>
<evidence type="ECO:0000255" key="1">
    <source>
        <dbReference type="HAMAP-Rule" id="MF_00816"/>
    </source>
</evidence>
<dbReference type="EMBL" id="FM180568">
    <property type="protein sequence ID" value="CAS09882.1"/>
    <property type="molecule type" value="Genomic_DNA"/>
</dbReference>
<dbReference type="RefSeq" id="WP_001135664.1">
    <property type="nucleotide sequence ID" value="NC_011601.1"/>
</dbReference>
<dbReference type="SMR" id="B7UFK4"/>
<dbReference type="KEGG" id="ecg:E2348C_2334"/>
<dbReference type="HOGENOM" id="CLU_175457_0_0_6"/>
<dbReference type="Proteomes" id="UP000008205">
    <property type="component" value="Chromosome"/>
</dbReference>
<dbReference type="FunFam" id="1.10.3390.10:FF:000001">
    <property type="entry name" value="UPF0352 protein YejL"/>
    <property type="match status" value="1"/>
</dbReference>
<dbReference type="Gene3D" id="1.10.3390.10">
    <property type="entry name" value="YejL-like"/>
    <property type="match status" value="1"/>
</dbReference>
<dbReference type="HAMAP" id="MF_00816">
    <property type="entry name" value="UPF0352"/>
    <property type="match status" value="1"/>
</dbReference>
<dbReference type="InterPro" id="IPR009857">
    <property type="entry name" value="UPF0352"/>
</dbReference>
<dbReference type="InterPro" id="IPR023202">
    <property type="entry name" value="YejL_sf"/>
</dbReference>
<dbReference type="NCBIfam" id="NF010242">
    <property type="entry name" value="PRK13689.1"/>
    <property type="match status" value="1"/>
</dbReference>
<dbReference type="Pfam" id="PF07208">
    <property type="entry name" value="DUF1414"/>
    <property type="match status" value="1"/>
</dbReference>
<dbReference type="PIRSF" id="PIRSF006188">
    <property type="entry name" value="UCP006188"/>
    <property type="match status" value="1"/>
</dbReference>
<dbReference type="SUPFAM" id="SSF158651">
    <property type="entry name" value="YejL-like"/>
    <property type="match status" value="1"/>
</dbReference>
<reference key="1">
    <citation type="journal article" date="2009" name="J. Bacteriol.">
        <title>Complete genome sequence and comparative genome analysis of enteropathogenic Escherichia coli O127:H6 strain E2348/69.</title>
        <authorList>
            <person name="Iguchi A."/>
            <person name="Thomson N.R."/>
            <person name="Ogura Y."/>
            <person name="Saunders D."/>
            <person name="Ooka T."/>
            <person name="Henderson I.R."/>
            <person name="Harris D."/>
            <person name="Asadulghani M."/>
            <person name="Kurokawa K."/>
            <person name="Dean P."/>
            <person name="Kenny B."/>
            <person name="Quail M.A."/>
            <person name="Thurston S."/>
            <person name="Dougan G."/>
            <person name="Hayashi T."/>
            <person name="Parkhill J."/>
            <person name="Frankel G."/>
        </authorList>
    </citation>
    <scope>NUCLEOTIDE SEQUENCE [LARGE SCALE GENOMIC DNA]</scope>
    <source>
        <strain>E2348/69 / EPEC</strain>
    </source>
</reference>
<name>YEJL_ECO27</name>
<comment type="similarity">
    <text evidence="1">Belongs to the UPF0352 family.</text>
</comment>
<proteinExistence type="inferred from homology"/>
<protein>
    <recommendedName>
        <fullName evidence="1">UPF0352 protein YejL</fullName>
    </recommendedName>
</protein>
<keyword id="KW-1185">Reference proteome</keyword>
<feature type="chain" id="PRO_1000148648" description="UPF0352 protein YejL">
    <location>
        <begin position="1"/>
        <end position="75"/>
    </location>
</feature>
<organism>
    <name type="scientific">Escherichia coli O127:H6 (strain E2348/69 / EPEC)</name>
    <dbReference type="NCBI Taxonomy" id="574521"/>
    <lineage>
        <taxon>Bacteria</taxon>
        <taxon>Pseudomonadati</taxon>
        <taxon>Pseudomonadota</taxon>
        <taxon>Gammaproteobacteria</taxon>
        <taxon>Enterobacterales</taxon>
        <taxon>Enterobacteriaceae</taxon>
        <taxon>Escherichia</taxon>
    </lineage>
</organism>
<gene>
    <name evidence="1" type="primary">yejL</name>
    <name type="ordered locus">E2348C_2334</name>
</gene>